<proteinExistence type="inferred from homology"/>
<accession>Q5X877</accession>
<name>SURA_LEGPA</name>
<dbReference type="EC" id="5.2.1.8" evidence="1"/>
<dbReference type="EMBL" id="CR628336">
    <property type="protein sequence ID" value="CAH11524.1"/>
    <property type="molecule type" value="Genomic_DNA"/>
</dbReference>
<dbReference type="RefSeq" id="WP_011212999.1">
    <property type="nucleotide sequence ID" value="NC_006368.1"/>
</dbReference>
<dbReference type="SMR" id="Q5X877"/>
<dbReference type="KEGG" id="lpp:lpp0376"/>
<dbReference type="LegioList" id="lpp0376"/>
<dbReference type="HOGENOM" id="CLU_034646_11_0_6"/>
<dbReference type="GO" id="GO:0030288">
    <property type="term" value="C:outer membrane-bounded periplasmic space"/>
    <property type="evidence" value="ECO:0007669"/>
    <property type="project" value="InterPro"/>
</dbReference>
<dbReference type="GO" id="GO:0042277">
    <property type="term" value="F:peptide binding"/>
    <property type="evidence" value="ECO:0007669"/>
    <property type="project" value="InterPro"/>
</dbReference>
<dbReference type="GO" id="GO:0003755">
    <property type="term" value="F:peptidyl-prolyl cis-trans isomerase activity"/>
    <property type="evidence" value="ECO:0007669"/>
    <property type="project" value="UniProtKB-UniRule"/>
</dbReference>
<dbReference type="GO" id="GO:0051082">
    <property type="term" value="F:unfolded protein binding"/>
    <property type="evidence" value="ECO:0007669"/>
    <property type="project" value="UniProtKB-UniRule"/>
</dbReference>
<dbReference type="GO" id="GO:0043165">
    <property type="term" value="P:Gram-negative-bacterium-type cell outer membrane assembly"/>
    <property type="evidence" value="ECO:0007669"/>
    <property type="project" value="InterPro"/>
</dbReference>
<dbReference type="GO" id="GO:0006457">
    <property type="term" value="P:protein folding"/>
    <property type="evidence" value="ECO:0007669"/>
    <property type="project" value="UniProtKB-UniRule"/>
</dbReference>
<dbReference type="GO" id="GO:0050821">
    <property type="term" value="P:protein stabilization"/>
    <property type="evidence" value="ECO:0007669"/>
    <property type="project" value="InterPro"/>
</dbReference>
<dbReference type="Gene3D" id="3.10.50.40">
    <property type="match status" value="2"/>
</dbReference>
<dbReference type="Gene3D" id="1.10.4030.10">
    <property type="entry name" value="Porin chaperone SurA, peptide-binding domain"/>
    <property type="match status" value="1"/>
</dbReference>
<dbReference type="HAMAP" id="MF_01183">
    <property type="entry name" value="Chaperone_SurA"/>
    <property type="match status" value="1"/>
</dbReference>
<dbReference type="InterPro" id="IPR050280">
    <property type="entry name" value="OMP_Chaperone_SurA"/>
</dbReference>
<dbReference type="InterPro" id="IPR046357">
    <property type="entry name" value="PPIase_dom_sf"/>
</dbReference>
<dbReference type="InterPro" id="IPR000297">
    <property type="entry name" value="PPIase_PpiC"/>
</dbReference>
<dbReference type="InterPro" id="IPR023034">
    <property type="entry name" value="PPIase_SurA"/>
</dbReference>
<dbReference type="InterPro" id="IPR015391">
    <property type="entry name" value="SurA_N"/>
</dbReference>
<dbReference type="InterPro" id="IPR027304">
    <property type="entry name" value="Trigger_fact/SurA_dom_sf"/>
</dbReference>
<dbReference type="PANTHER" id="PTHR47637">
    <property type="entry name" value="CHAPERONE SURA"/>
    <property type="match status" value="1"/>
</dbReference>
<dbReference type="PANTHER" id="PTHR47637:SF1">
    <property type="entry name" value="CHAPERONE SURA"/>
    <property type="match status" value="1"/>
</dbReference>
<dbReference type="Pfam" id="PF00639">
    <property type="entry name" value="Rotamase"/>
    <property type="match status" value="1"/>
</dbReference>
<dbReference type="Pfam" id="PF13616">
    <property type="entry name" value="Rotamase_3"/>
    <property type="match status" value="1"/>
</dbReference>
<dbReference type="Pfam" id="PF09312">
    <property type="entry name" value="SurA_N"/>
    <property type="match status" value="1"/>
</dbReference>
<dbReference type="SUPFAM" id="SSF54534">
    <property type="entry name" value="FKBP-like"/>
    <property type="match status" value="2"/>
</dbReference>
<dbReference type="SUPFAM" id="SSF109998">
    <property type="entry name" value="Triger factor/SurA peptide-binding domain-like"/>
    <property type="match status" value="1"/>
</dbReference>
<dbReference type="PROSITE" id="PS50198">
    <property type="entry name" value="PPIC_PPIASE_2"/>
    <property type="match status" value="2"/>
</dbReference>
<sequence>MFKRIALVCALFSGICFAEGKQLLDKVVAIVNDNVITSSELNAQVELSKKQIIAQNMQMPDESVLRKQVLQHLIDVDLEMQMAKQNGITIENAEIDEAIEKIAASNHLNLSQMRDEITKQGISWQEYRQNIRKEMLISRVQQKAVGKDIIVTNEQVEQYLKNAGRIENSNLTYHLKNIVIPLSEEPTTKQLQRAKIEAENLLNKIKKGEDFSRLAIEESSGEFALEGGDLGERHLAELPEVFAKEVVHMKVGQVAGPIRAGNGFHLIKLVAVGGENQRHVITQTHVRHILLKPDASMVPSEAIKQVNNIYRQIQSGKDFALMAKQYSLDAASAVKGGDLGWVNPGELVPEFEKTMNSLPLHKVSKPVKTQYGWHLIEVIARRQKDDSEAFKKQQVRQFLQQRKFVEAVQNWQQHLRSQAYINIVDKDLA</sequence>
<comment type="function">
    <text evidence="1">Chaperone involved in the correct folding and assembly of outer membrane proteins. Recognizes specific patterns of aromatic residues and the orientation of their side chains, which are found more frequently in integral outer membrane proteins. May act in both early periplasmic and late outer membrane-associated steps of protein maturation.</text>
</comment>
<comment type="catalytic activity">
    <reaction evidence="1">
        <text>[protein]-peptidylproline (omega=180) = [protein]-peptidylproline (omega=0)</text>
        <dbReference type="Rhea" id="RHEA:16237"/>
        <dbReference type="Rhea" id="RHEA-COMP:10747"/>
        <dbReference type="Rhea" id="RHEA-COMP:10748"/>
        <dbReference type="ChEBI" id="CHEBI:83833"/>
        <dbReference type="ChEBI" id="CHEBI:83834"/>
        <dbReference type="EC" id="5.2.1.8"/>
    </reaction>
</comment>
<comment type="subcellular location">
    <subcellularLocation>
        <location evidence="1">Periplasm</location>
    </subcellularLocation>
    <text evidence="1">Is capable of associating with the outer membrane.</text>
</comment>
<comment type="domain">
    <text evidence="1">The PPIase activity resides only in the second parvulin domain. The N-terminal region and the C-terminal tail are necessary and sufficient for the chaperone activity of SurA. The PPIase activity is dispensable for SurA to function as a chaperone. The N-terminal region and the C-terminal tail are also required for porin recognition.</text>
</comment>
<protein>
    <recommendedName>
        <fullName evidence="1">Chaperone SurA</fullName>
    </recommendedName>
    <alternativeName>
        <fullName evidence="1">Peptidyl-prolyl cis-trans isomerase SurA</fullName>
        <shortName evidence="1">PPIase SurA</shortName>
        <ecNumber evidence="1">5.2.1.8</ecNumber>
    </alternativeName>
    <alternativeName>
        <fullName evidence="1">Rotamase SurA</fullName>
    </alternativeName>
</protein>
<gene>
    <name evidence="1" type="primary">surA</name>
    <name type="ordered locus">lpp0376</name>
</gene>
<feature type="signal peptide" evidence="1">
    <location>
        <begin position="1"/>
        <end position="18"/>
    </location>
</feature>
<feature type="chain" id="PRO_0000270018" description="Chaperone SurA">
    <location>
        <begin position="19"/>
        <end position="429"/>
    </location>
</feature>
<feature type="domain" description="PpiC 1" evidence="1">
    <location>
        <begin position="170"/>
        <end position="271"/>
    </location>
</feature>
<feature type="domain" description="PpiC 2" evidence="1">
    <location>
        <begin position="281"/>
        <end position="380"/>
    </location>
</feature>
<evidence type="ECO:0000255" key="1">
    <source>
        <dbReference type="HAMAP-Rule" id="MF_01183"/>
    </source>
</evidence>
<keyword id="KW-0143">Chaperone</keyword>
<keyword id="KW-0413">Isomerase</keyword>
<keyword id="KW-0574">Periplasm</keyword>
<keyword id="KW-0677">Repeat</keyword>
<keyword id="KW-0697">Rotamase</keyword>
<keyword id="KW-0732">Signal</keyword>
<organism>
    <name type="scientific">Legionella pneumophila (strain Paris)</name>
    <dbReference type="NCBI Taxonomy" id="297246"/>
    <lineage>
        <taxon>Bacteria</taxon>
        <taxon>Pseudomonadati</taxon>
        <taxon>Pseudomonadota</taxon>
        <taxon>Gammaproteobacteria</taxon>
        <taxon>Legionellales</taxon>
        <taxon>Legionellaceae</taxon>
        <taxon>Legionella</taxon>
    </lineage>
</organism>
<reference key="1">
    <citation type="journal article" date="2004" name="Nat. Genet.">
        <title>Evidence in the Legionella pneumophila genome for exploitation of host cell functions and high genome plasticity.</title>
        <authorList>
            <person name="Cazalet C."/>
            <person name="Rusniok C."/>
            <person name="Brueggemann H."/>
            <person name="Zidane N."/>
            <person name="Magnier A."/>
            <person name="Ma L."/>
            <person name="Tichit M."/>
            <person name="Jarraud S."/>
            <person name="Bouchier C."/>
            <person name="Vandenesch F."/>
            <person name="Kunst F."/>
            <person name="Etienne J."/>
            <person name="Glaser P."/>
            <person name="Buchrieser C."/>
        </authorList>
    </citation>
    <scope>NUCLEOTIDE SEQUENCE [LARGE SCALE GENOMIC DNA]</scope>
    <source>
        <strain>Paris</strain>
    </source>
</reference>